<sequence>MANNEQKRDEGYIEKLVQVNRVAKTVKGGRIFAFTALTVVGDGKGRVGFGRGKAREVPAAIQKAMEAARRNMIQVDLNGTTLQYPTKSAHGASKVYMQPASEGTGIIAGGAMRAVLEVAGVQNVLAKCYGSTNPVNVVYATFKGLKNMQAPEAVAAKRGKSVEEIL</sequence>
<dbReference type="EMBL" id="CP000744">
    <property type="protein sequence ID" value="ABR84354.1"/>
    <property type="molecule type" value="Genomic_DNA"/>
</dbReference>
<dbReference type="RefSeq" id="WP_003093697.1">
    <property type="nucleotide sequence ID" value="NC_009656.1"/>
</dbReference>
<dbReference type="SMR" id="A6UZK5"/>
<dbReference type="GeneID" id="77219215"/>
<dbReference type="KEGG" id="pap:PSPA7_0854"/>
<dbReference type="HOGENOM" id="CLU_065898_2_2_6"/>
<dbReference type="Proteomes" id="UP000001582">
    <property type="component" value="Chromosome"/>
</dbReference>
<dbReference type="GO" id="GO:0015935">
    <property type="term" value="C:small ribosomal subunit"/>
    <property type="evidence" value="ECO:0007669"/>
    <property type="project" value="InterPro"/>
</dbReference>
<dbReference type="GO" id="GO:0019843">
    <property type="term" value="F:rRNA binding"/>
    <property type="evidence" value="ECO:0007669"/>
    <property type="project" value="UniProtKB-UniRule"/>
</dbReference>
<dbReference type="GO" id="GO:0003735">
    <property type="term" value="F:structural constituent of ribosome"/>
    <property type="evidence" value="ECO:0007669"/>
    <property type="project" value="InterPro"/>
</dbReference>
<dbReference type="GO" id="GO:0006412">
    <property type="term" value="P:translation"/>
    <property type="evidence" value="ECO:0007669"/>
    <property type="project" value="UniProtKB-UniRule"/>
</dbReference>
<dbReference type="FunFam" id="3.30.160.20:FF:000001">
    <property type="entry name" value="30S ribosomal protein S5"/>
    <property type="match status" value="1"/>
</dbReference>
<dbReference type="FunFam" id="3.30.230.10:FF:000002">
    <property type="entry name" value="30S ribosomal protein S5"/>
    <property type="match status" value="1"/>
</dbReference>
<dbReference type="Gene3D" id="3.30.160.20">
    <property type="match status" value="1"/>
</dbReference>
<dbReference type="Gene3D" id="3.30.230.10">
    <property type="match status" value="1"/>
</dbReference>
<dbReference type="HAMAP" id="MF_01307_B">
    <property type="entry name" value="Ribosomal_uS5_B"/>
    <property type="match status" value="1"/>
</dbReference>
<dbReference type="InterPro" id="IPR020568">
    <property type="entry name" value="Ribosomal_Su5_D2-typ_SF"/>
</dbReference>
<dbReference type="InterPro" id="IPR000851">
    <property type="entry name" value="Ribosomal_uS5"/>
</dbReference>
<dbReference type="InterPro" id="IPR005712">
    <property type="entry name" value="Ribosomal_uS5_bac-type"/>
</dbReference>
<dbReference type="InterPro" id="IPR005324">
    <property type="entry name" value="Ribosomal_uS5_C"/>
</dbReference>
<dbReference type="InterPro" id="IPR013810">
    <property type="entry name" value="Ribosomal_uS5_N"/>
</dbReference>
<dbReference type="InterPro" id="IPR018192">
    <property type="entry name" value="Ribosomal_uS5_N_CS"/>
</dbReference>
<dbReference type="InterPro" id="IPR014721">
    <property type="entry name" value="Ribsml_uS5_D2-typ_fold_subgr"/>
</dbReference>
<dbReference type="NCBIfam" id="TIGR01021">
    <property type="entry name" value="rpsE_bact"/>
    <property type="match status" value="1"/>
</dbReference>
<dbReference type="PANTHER" id="PTHR48277">
    <property type="entry name" value="MITOCHONDRIAL RIBOSOMAL PROTEIN S5"/>
    <property type="match status" value="1"/>
</dbReference>
<dbReference type="PANTHER" id="PTHR48277:SF1">
    <property type="entry name" value="MITOCHONDRIAL RIBOSOMAL PROTEIN S5"/>
    <property type="match status" value="1"/>
</dbReference>
<dbReference type="Pfam" id="PF00333">
    <property type="entry name" value="Ribosomal_S5"/>
    <property type="match status" value="1"/>
</dbReference>
<dbReference type="Pfam" id="PF03719">
    <property type="entry name" value="Ribosomal_S5_C"/>
    <property type="match status" value="1"/>
</dbReference>
<dbReference type="SUPFAM" id="SSF54768">
    <property type="entry name" value="dsRNA-binding domain-like"/>
    <property type="match status" value="1"/>
</dbReference>
<dbReference type="SUPFAM" id="SSF54211">
    <property type="entry name" value="Ribosomal protein S5 domain 2-like"/>
    <property type="match status" value="1"/>
</dbReference>
<dbReference type="PROSITE" id="PS00585">
    <property type="entry name" value="RIBOSOMAL_S5"/>
    <property type="match status" value="1"/>
</dbReference>
<dbReference type="PROSITE" id="PS50881">
    <property type="entry name" value="S5_DSRBD"/>
    <property type="match status" value="1"/>
</dbReference>
<organism>
    <name type="scientific">Pseudomonas paraeruginosa (strain DSM 24068 / PA7)</name>
    <name type="common">Pseudomonas aeruginosa (strain PA7)</name>
    <dbReference type="NCBI Taxonomy" id="381754"/>
    <lineage>
        <taxon>Bacteria</taxon>
        <taxon>Pseudomonadati</taxon>
        <taxon>Pseudomonadota</taxon>
        <taxon>Gammaproteobacteria</taxon>
        <taxon>Pseudomonadales</taxon>
        <taxon>Pseudomonadaceae</taxon>
        <taxon>Pseudomonas</taxon>
        <taxon>Pseudomonas paraeruginosa</taxon>
    </lineage>
</organism>
<keyword id="KW-0687">Ribonucleoprotein</keyword>
<keyword id="KW-0689">Ribosomal protein</keyword>
<keyword id="KW-0694">RNA-binding</keyword>
<keyword id="KW-0699">rRNA-binding</keyword>
<name>RS5_PSEP7</name>
<evidence type="ECO:0000255" key="1">
    <source>
        <dbReference type="HAMAP-Rule" id="MF_01307"/>
    </source>
</evidence>
<evidence type="ECO:0000305" key="2"/>
<protein>
    <recommendedName>
        <fullName evidence="1">Small ribosomal subunit protein uS5</fullName>
    </recommendedName>
    <alternativeName>
        <fullName evidence="2">30S ribosomal protein S5</fullName>
    </alternativeName>
</protein>
<comment type="function">
    <text evidence="1">With S4 and S12 plays an important role in translational accuracy.</text>
</comment>
<comment type="function">
    <text evidence="1">Located at the back of the 30S subunit body where it stabilizes the conformation of the head with respect to the body.</text>
</comment>
<comment type="subunit">
    <text evidence="1">Part of the 30S ribosomal subunit. Contacts proteins S4 and S8.</text>
</comment>
<comment type="domain">
    <text>The N-terminal domain interacts with the head of the 30S subunit; the C-terminal domain interacts with the body and contacts protein S4. The interaction surface between S4 and S5 is involved in control of translational fidelity.</text>
</comment>
<comment type="similarity">
    <text evidence="1">Belongs to the universal ribosomal protein uS5 family.</text>
</comment>
<reference key="1">
    <citation type="submission" date="2007-06" db="EMBL/GenBank/DDBJ databases">
        <authorList>
            <person name="Dodson R.J."/>
            <person name="Harkins D."/>
            <person name="Paulsen I.T."/>
        </authorList>
    </citation>
    <scope>NUCLEOTIDE SEQUENCE [LARGE SCALE GENOMIC DNA]</scope>
    <source>
        <strain>DSM 24068 / PA7</strain>
    </source>
</reference>
<gene>
    <name evidence="1" type="primary">rpsE</name>
    <name type="ordered locus">PSPA7_0854</name>
</gene>
<proteinExistence type="inferred from homology"/>
<feature type="chain" id="PRO_0000323171" description="Small ribosomal subunit protein uS5">
    <location>
        <begin position="1"/>
        <end position="166"/>
    </location>
</feature>
<feature type="domain" description="S5 DRBM" evidence="1">
    <location>
        <begin position="12"/>
        <end position="75"/>
    </location>
</feature>
<accession>A6UZK5</accession>